<feature type="chain" id="PRO_1000072424" description="UPF0178 protein NWMN_0650">
    <location>
        <begin position="1"/>
        <end position="152"/>
    </location>
</feature>
<comment type="similarity">
    <text evidence="1">Belongs to the UPF0178 family.</text>
</comment>
<proteinExistence type="inferred from homology"/>
<protein>
    <recommendedName>
        <fullName evidence="1">UPF0178 protein NWMN_0650</fullName>
    </recommendedName>
</protein>
<gene>
    <name type="ordered locus">NWMN_0650</name>
</gene>
<sequence>MTHIIIDGDACPVVDSIIDLTTETGIFVTIIRSFSHFSNQLYPPHVSTLYVDDGPDAVDYKIVQLSTKDDIVVTQDYGLASLLVDKVLIVMHHNGKIYNSKNIQQLLDKRYMNAQIRKQGGRHKGPPPFTKQDQKVFEQSLLKVIHRIKELD</sequence>
<organism>
    <name type="scientific">Staphylococcus aureus (strain Newman)</name>
    <dbReference type="NCBI Taxonomy" id="426430"/>
    <lineage>
        <taxon>Bacteria</taxon>
        <taxon>Bacillati</taxon>
        <taxon>Bacillota</taxon>
        <taxon>Bacilli</taxon>
        <taxon>Bacillales</taxon>
        <taxon>Staphylococcaceae</taxon>
        <taxon>Staphylococcus</taxon>
    </lineage>
</organism>
<reference key="1">
    <citation type="journal article" date="2008" name="J. Bacteriol.">
        <title>Genome sequence of Staphylococcus aureus strain Newman and comparative analysis of staphylococcal genomes: polymorphism and evolution of two major pathogenicity islands.</title>
        <authorList>
            <person name="Baba T."/>
            <person name="Bae T."/>
            <person name="Schneewind O."/>
            <person name="Takeuchi F."/>
            <person name="Hiramatsu K."/>
        </authorList>
    </citation>
    <scope>NUCLEOTIDE SEQUENCE [LARGE SCALE GENOMIC DNA]</scope>
    <source>
        <strain>Newman</strain>
    </source>
</reference>
<name>Y650_STAAE</name>
<dbReference type="EMBL" id="AP009351">
    <property type="protein sequence ID" value="BAF66922.1"/>
    <property type="molecule type" value="Genomic_DNA"/>
</dbReference>
<dbReference type="RefSeq" id="WP_000148828.1">
    <property type="nucleotide sequence ID" value="NZ_JBBIAE010000002.1"/>
</dbReference>
<dbReference type="SMR" id="A6QEZ0"/>
<dbReference type="KEGG" id="sae:NWMN_0650"/>
<dbReference type="HOGENOM" id="CLU_106619_0_0_9"/>
<dbReference type="Proteomes" id="UP000006386">
    <property type="component" value="Chromosome"/>
</dbReference>
<dbReference type="HAMAP" id="MF_00489">
    <property type="entry name" value="UPF0178"/>
    <property type="match status" value="1"/>
</dbReference>
<dbReference type="InterPro" id="IPR003791">
    <property type="entry name" value="UPF0178"/>
</dbReference>
<dbReference type="NCBIfam" id="NF001095">
    <property type="entry name" value="PRK00124.1"/>
    <property type="match status" value="1"/>
</dbReference>
<dbReference type="PANTHER" id="PTHR35146">
    <property type="entry name" value="UPF0178 PROTEIN YAII"/>
    <property type="match status" value="1"/>
</dbReference>
<dbReference type="PANTHER" id="PTHR35146:SF1">
    <property type="entry name" value="UPF0178 PROTEIN YAII"/>
    <property type="match status" value="1"/>
</dbReference>
<dbReference type="Pfam" id="PF02639">
    <property type="entry name" value="DUF188"/>
    <property type="match status" value="1"/>
</dbReference>
<accession>A6QEZ0</accession>
<evidence type="ECO:0000255" key="1">
    <source>
        <dbReference type="HAMAP-Rule" id="MF_00489"/>
    </source>
</evidence>